<keyword id="KW-0007">Acetylation</keyword>
<keyword id="KW-0021">Allosteric enzyme</keyword>
<keyword id="KW-0025">Alternative splicing</keyword>
<keyword id="KW-0067">ATP-binding</keyword>
<keyword id="KW-0963">Cytoplasm</keyword>
<keyword id="KW-0324">Glycolysis</keyword>
<keyword id="KW-0325">Glycoprotein</keyword>
<keyword id="KW-0418">Kinase</keyword>
<keyword id="KW-0460">Magnesium</keyword>
<keyword id="KW-0479">Metal-binding</keyword>
<keyword id="KW-0547">Nucleotide-binding</keyword>
<keyword id="KW-0597">Phosphoprotein</keyword>
<keyword id="KW-1185">Reference proteome</keyword>
<keyword id="KW-0808">Transferase</keyword>
<gene>
    <name type="primary">Pfkp</name>
    <name type="synonym">Pfkc</name>
</gene>
<dbReference type="EC" id="2.7.1.11" evidence="4"/>
<dbReference type="EMBL" id="Y19008">
    <property type="protein sequence ID" value="CAB64347.1"/>
    <property type="molecule type" value="mRNA"/>
</dbReference>
<dbReference type="EMBL" id="AF123533">
    <property type="protein sequence ID" value="AAD23571.1"/>
    <property type="molecule type" value="mRNA"/>
</dbReference>
<dbReference type="EMBL" id="AF249893">
    <property type="protein sequence ID" value="AAF75700.1"/>
    <property type="molecule type" value="Genomic_DNA"/>
</dbReference>
<dbReference type="EMBL" id="AF250369">
    <property type="protein sequence ID" value="AAF75700.1"/>
    <property type="status" value="JOINED"/>
    <property type="molecule type" value="Genomic_DNA"/>
</dbReference>
<dbReference type="EMBL" id="AF250370">
    <property type="protein sequence ID" value="AAF75700.1"/>
    <property type="status" value="JOINED"/>
    <property type="molecule type" value="Genomic_DNA"/>
</dbReference>
<dbReference type="EMBL" id="AF250371">
    <property type="protein sequence ID" value="AAF75700.1"/>
    <property type="status" value="JOINED"/>
    <property type="molecule type" value="Genomic_DNA"/>
</dbReference>
<dbReference type="EMBL" id="AF250372">
    <property type="protein sequence ID" value="AAF75700.1"/>
    <property type="status" value="JOINED"/>
    <property type="molecule type" value="Genomic_DNA"/>
</dbReference>
<dbReference type="EMBL" id="AF251021">
    <property type="protein sequence ID" value="AAF75700.1"/>
    <property type="status" value="JOINED"/>
    <property type="molecule type" value="Genomic_DNA"/>
</dbReference>
<dbReference type="EMBL" id="AY779275">
    <property type="protein sequence ID" value="AAX11357.1"/>
    <property type="molecule type" value="mRNA"/>
</dbReference>
<dbReference type="EMBL" id="AY779276">
    <property type="protein sequence ID" value="AAX11358.1"/>
    <property type="molecule type" value="mRNA"/>
</dbReference>
<dbReference type="EMBL" id="AK049841">
    <property type="protein sequence ID" value="BAC33949.1"/>
    <property type="molecule type" value="mRNA"/>
</dbReference>
<dbReference type="EMBL" id="AK078254">
    <property type="protein sequence ID" value="BAC37195.1"/>
    <property type="molecule type" value="mRNA"/>
</dbReference>
<dbReference type="EMBL" id="AK152670">
    <property type="protein sequence ID" value="BAE31405.1"/>
    <property type="molecule type" value="mRNA"/>
</dbReference>
<dbReference type="EMBL" id="AK154125">
    <property type="protein sequence ID" value="BAE32390.1"/>
    <property type="molecule type" value="mRNA"/>
</dbReference>
<dbReference type="EMBL" id="AK165422">
    <property type="protein sequence ID" value="BAE38177.1"/>
    <property type="molecule type" value="mRNA"/>
</dbReference>
<dbReference type="EMBL" id="AK165425">
    <property type="protein sequence ID" value="BAE38180.1"/>
    <property type="molecule type" value="mRNA"/>
</dbReference>
<dbReference type="EMBL" id="AK170624">
    <property type="protein sequence ID" value="BAE41918.1"/>
    <property type="molecule type" value="mRNA"/>
</dbReference>
<dbReference type="EMBL" id="AK171062">
    <property type="protein sequence ID" value="BAE42221.1"/>
    <property type="molecule type" value="mRNA"/>
</dbReference>
<dbReference type="EMBL" id="CT010268">
    <property type="protein sequence ID" value="CAJ18476.1"/>
    <property type="molecule type" value="mRNA"/>
</dbReference>
<dbReference type="EMBL" id="BC006926">
    <property type="protein sequence ID" value="AAH06926.1"/>
    <property type="molecule type" value="mRNA"/>
</dbReference>
<dbReference type="CCDS" id="CCDS26230.1">
    <molecule id="Q9WUA3-1"/>
</dbReference>
<dbReference type="RefSeq" id="NP_001278000.1">
    <property type="nucleotide sequence ID" value="NM_001291071.1"/>
</dbReference>
<dbReference type="RefSeq" id="NP_062677.1">
    <molecule id="Q9WUA3-1"/>
    <property type="nucleotide sequence ID" value="NM_019703.4"/>
</dbReference>
<dbReference type="SMR" id="Q9WUA3"/>
<dbReference type="BioGRID" id="207967">
    <property type="interactions" value="23"/>
</dbReference>
<dbReference type="ComplexPortal" id="CPX-2053">
    <property type="entry name" value="6-phosphofructokinase, P4 homotetramer"/>
</dbReference>
<dbReference type="FunCoup" id="Q9WUA3">
    <property type="interactions" value="1757"/>
</dbReference>
<dbReference type="IntAct" id="Q9WUA3">
    <property type="interactions" value="4"/>
</dbReference>
<dbReference type="STRING" id="10090.ENSMUSP00000117030"/>
<dbReference type="GlyCosmos" id="Q9WUA3">
    <property type="glycosylation" value="1 site, No reported glycans"/>
</dbReference>
<dbReference type="GlyGen" id="Q9WUA3">
    <property type="glycosylation" value="2 sites, 1 O-linked glycan (1 site)"/>
</dbReference>
<dbReference type="iPTMnet" id="Q9WUA3"/>
<dbReference type="PhosphoSitePlus" id="Q9WUA3"/>
<dbReference type="SwissPalm" id="Q9WUA3"/>
<dbReference type="jPOST" id="Q9WUA3"/>
<dbReference type="PaxDb" id="10090-ENSMUSP00000117030"/>
<dbReference type="PeptideAtlas" id="Q9WUA3"/>
<dbReference type="ProteomicsDB" id="287687">
    <molecule id="Q9WUA3-1"/>
</dbReference>
<dbReference type="ProteomicsDB" id="287688">
    <molecule id="Q9WUA3-2"/>
</dbReference>
<dbReference type="Pumba" id="Q9WUA3"/>
<dbReference type="Antibodypedia" id="23840">
    <property type="antibodies" value="524 antibodies from 35 providers"/>
</dbReference>
<dbReference type="DNASU" id="56421"/>
<dbReference type="Ensembl" id="ENSMUST00000138703.8">
    <molecule id="Q9WUA3-1"/>
    <property type="protein sequence ID" value="ENSMUSP00000117030.2"/>
    <property type="gene ID" value="ENSMUSG00000021196.15"/>
</dbReference>
<dbReference type="GeneID" id="56421"/>
<dbReference type="KEGG" id="mmu:56421"/>
<dbReference type="UCSC" id="uc007pjz.2">
    <molecule id="Q9WUA3-1"/>
    <property type="organism name" value="mouse"/>
</dbReference>
<dbReference type="UCSC" id="uc007pkc.2">
    <molecule id="Q9WUA3-2"/>
    <property type="organism name" value="mouse"/>
</dbReference>
<dbReference type="AGR" id="MGI:1891833"/>
<dbReference type="CTD" id="5214"/>
<dbReference type="MGI" id="MGI:1891833">
    <property type="gene designation" value="Pfkp"/>
</dbReference>
<dbReference type="VEuPathDB" id="HostDB:ENSMUSG00000021196"/>
<dbReference type="eggNOG" id="KOG2440">
    <property type="taxonomic scope" value="Eukaryota"/>
</dbReference>
<dbReference type="GeneTree" id="ENSGT00940000155002"/>
<dbReference type="HOGENOM" id="CLU_011053_0_0_1"/>
<dbReference type="InParanoid" id="Q9WUA3"/>
<dbReference type="OMA" id="EWQDQMC"/>
<dbReference type="OrthoDB" id="537915at2759"/>
<dbReference type="TreeFam" id="TF300411"/>
<dbReference type="BRENDA" id="2.7.1.11">
    <property type="organism ID" value="3474"/>
</dbReference>
<dbReference type="Reactome" id="R-MMU-70171">
    <property type="pathway name" value="Glycolysis"/>
</dbReference>
<dbReference type="SABIO-RK" id="Q9WUA3"/>
<dbReference type="UniPathway" id="UPA00109">
    <property type="reaction ID" value="UER00182"/>
</dbReference>
<dbReference type="BioGRID-ORCS" id="56421">
    <property type="hits" value="2 hits in 77 CRISPR screens"/>
</dbReference>
<dbReference type="CD-CODE" id="CE726F99">
    <property type="entry name" value="Postsynaptic density"/>
</dbReference>
<dbReference type="ChiTaRS" id="Pfkp">
    <property type="organism name" value="mouse"/>
</dbReference>
<dbReference type="PRO" id="PR:Q9WUA3"/>
<dbReference type="Proteomes" id="UP000000589">
    <property type="component" value="Chromosome 13"/>
</dbReference>
<dbReference type="RNAct" id="Q9WUA3">
    <property type="molecule type" value="protein"/>
</dbReference>
<dbReference type="Bgee" id="ENSMUSG00000021196">
    <property type="expression patterns" value="Expressed in retinal neural layer and 290 other cell types or tissues"/>
</dbReference>
<dbReference type="ExpressionAtlas" id="Q9WUA3">
    <property type="expression patterns" value="baseline and differential"/>
</dbReference>
<dbReference type="GO" id="GO:0005945">
    <property type="term" value="C:6-phosphofructokinase complex"/>
    <property type="evidence" value="ECO:0000250"/>
    <property type="project" value="MGI"/>
</dbReference>
<dbReference type="GO" id="GO:0005829">
    <property type="term" value="C:cytosol"/>
    <property type="evidence" value="ECO:0000314"/>
    <property type="project" value="MGI"/>
</dbReference>
<dbReference type="GO" id="GO:0003872">
    <property type="term" value="F:6-phosphofructokinase activity"/>
    <property type="evidence" value="ECO:0000250"/>
    <property type="project" value="UniProtKB"/>
</dbReference>
<dbReference type="GO" id="GO:0005524">
    <property type="term" value="F:ATP binding"/>
    <property type="evidence" value="ECO:0007669"/>
    <property type="project" value="UniProtKB-KW"/>
</dbReference>
<dbReference type="GO" id="GO:0046872">
    <property type="term" value="F:metal ion binding"/>
    <property type="evidence" value="ECO:0007669"/>
    <property type="project" value="UniProtKB-KW"/>
</dbReference>
<dbReference type="GO" id="GO:0044877">
    <property type="term" value="F:protein-containing complex binding"/>
    <property type="evidence" value="ECO:0000266"/>
    <property type="project" value="MGI"/>
</dbReference>
<dbReference type="GO" id="GO:1990830">
    <property type="term" value="P:cellular response to leukemia inhibitory factor"/>
    <property type="evidence" value="ECO:0000270"/>
    <property type="project" value="MGI"/>
</dbReference>
<dbReference type="GO" id="GO:0006002">
    <property type="term" value="P:fructose 6-phosphate metabolic process"/>
    <property type="evidence" value="ECO:0007669"/>
    <property type="project" value="InterPro"/>
</dbReference>
<dbReference type="GO" id="GO:0061615">
    <property type="term" value="P:glycolytic process through fructose-6-phosphate"/>
    <property type="evidence" value="ECO:0000250"/>
    <property type="project" value="MGI"/>
</dbReference>
<dbReference type="CDD" id="cd00764">
    <property type="entry name" value="Eukaryotic_PFK"/>
    <property type="match status" value="1"/>
</dbReference>
<dbReference type="FunFam" id="3.40.50.450:FF:000004">
    <property type="entry name" value="ATP-dependent 6-phosphofructokinase"/>
    <property type="match status" value="1"/>
</dbReference>
<dbReference type="FunFam" id="3.40.50.460:FF:000001">
    <property type="entry name" value="ATP-dependent 6-phosphofructokinase"/>
    <property type="match status" value="1"/>
</dbReference>
<dbReference type="FunFam" id="3.40.50.460:FF:000003">
    <property type="entry name" value="ATP-dependent 6-phosphofructokinase"/>
    <property type="match status" value="1"/>
</dbReference>
<dbReference type="FunFam" id="3.40.50.450:FF:000043">
    <property type="entry name" value="ATP-dependent 6-phosphofructokinase, platelet type"/>
    <property type="match status" value="1"/>
</dbReference>
<dbReference type="FunFam" id="3.40.50.450:FF:000064">
    <property type="entry name" value="Phosphofructokinase, platelet b"/>
    <property type="match status" value="1"/>
</dbReference>
<dbReference type="Gene3D" id="3.40.50.450">
    <property type="match status" value="2"/>
</dbReference>
<dbReference type="Gene3D" id="3.40.50.460">
    <property type="entry name" value="Phosphofructokinase domain"/>
    <property type="match status" value="2"/>
</dbReference>
<dbReference type="HAMAP" id="MF_03184">
    <property type="entry name" value="Phosphofructokinase_I_E"/>
    <property type="match status" value="1"/>
</dbReference>
<dbReference type="InterPro" id="IPR009161">
    <property type="entry name" value="6-Pfructokinase_euk"/>
</dbReference>
<dbReference type="InterPro" id="IPR022953">
    <property type="entry name" value="ATP_PFK"/>
</dbReference>
<dbReference type="InterPro" id="IPR041914">
    <property type="entry name" value="PFK_vert-type"/>
</dbReference>
<dbReference type="InterPro" id="IPR015912">
    <property type="entry name" value="Phosphofructokinase_CS"/>
</dbReference>
<dbReference type="InterPro" id="IPR000023">
    <property type="entry name" value="Phosphofructokinase_dom"/>
</dbReference>
<dbReference type="InterPro" id="IPR035966">
    <property type="entry name" value="PKF_sf"/>
</dbReference>
<dbReference type="NCBIfam" id="TIGR02478">
    <property type="entry name" value="6PF1K_euk"/>
    <property type="match status" value="1"/>
</dbReference>
<dbReference type="PANTHER" id="PTHR13697:SF5">
    <property type="entry name" value="ATP-DEPENDENT 6-PHOSPHOFRUCTOKINASE, PLATELET TYPE"/>
    <property type="match status" value="1"/>
</dbReference>
<dbReference type="PANTHER" id="PTHR13697">
    <property type="entry name" value="PHOSPHOFRUCTOKINASE"/>
    <property type="match status" value="1"/>
</dbReference>
<dbReference type="Pfam" id="PF00365">
    <property type="entry name" value="PFK"/>
    <property type="match status" value="2"/>
</dbReference>
<dbReference type="PIRSF" id="PIRSF000533">
    <property type="entry name" value="ATP_PFK_euk"/>
    <property type="match status" value="1"/>
</dbReference>
<dbReference type="PRINTS" id="PR00476">
    <property type="entry name" value="PHFRCTKINASE"/>
</dbReference>
<dbReference type="SUPFAM" id="SSF53784">
    <property type="entry name" value="Phosphofructokinase"/>
    <property type="match status" value="2"/>
</dbReference>
<dbReference type="PROSITE" id="PS00433">
    <property type="entry name" value="PHOSPHOFRUCTOKINASE"/>
    <property type="match status" value="2"/>
</dbReference>
<feature type="chain" id="PRO_0000112025" description="ATP-dependent 6-phosphofructokinase, platelet type">
    <location>
        <begin position="1"/>
        <end position="784"/>
    </location>
</feature>
<feature type="region of interest" description="N-terminal catalytic PFK domain 1">
    <location>
        <begin position="1"/>
        <end position="398"/>
    </location>
</feature>
<feature type="region of interest" description="Interdomain linker">
    <location>
        <begin position="399"/>
        <end position="410"/>
    </location>
</feature>
<feature type="region of interest" description="C-terminal regulatory PFK domain 2">
    <location>
        <begin position="411"/>
        <end position="784"/>
    </location>
</feature>
<feature type="active site" description="Proton acceptor" evidence="4">
    <location>
        <position position="174"/>
    </location>
</feature>
<feature type="binding site" evidence="4">
    <location>
        <position position="33"/>
    </location>
    <ligand>
        <name>ATP</name>
        <dbReference type="ChEBI" id="CHEBI:30616"/>
    </ligand>
</feature>
<feature type="binding site" evidence="4">
    <location>
        <begin position="96"/>
        <end position="97"/>
    </location>
    <ligand>
        <name>ATP</name>
        <dbReference type="ChEBI" id="CHEBI:30616"/>
    </ligand>
</feature>
<feature type="binding site" evidence="4">
    <location>
        <begin position="126"/>
        <end position="129"/>
    </location>
    <ligand>
        <name>ATP</name>
        <dbReference type="ChEBI" id="CHEBI:30616"/>
    </ligand>
</feature>
<feature type="binding site" evidence="4">
    <location>
        <position position="127"/>
    </location>
    <ligand>
        <name>Mg(2+)</name>
        <dbReference type="ChEBI" id="CHEBI:18420"/>
        <note>catalytic</note>
    </ligand>
</feature>
<feature type="binding site" description="in other chain" evidence="4">
    <location>
        <begin position="172"/>
        <end position="174"/>
    </location>
    <ligand>
        <name>substrate</name>
        <note>ligand shared between dimeric partners</note>
    </ligand>
</feature>
<feature type="binding site" evidence="4">
    <location>
        <position position="209"/>
    </location>
    <ligand>
        <name>substrate</name>
        <note>ligand shared between dimeric partners</note>
    </ligand>
</feature>
<feature type="binding site" description="in other chain" evidence="4">
    <location>
        <begin position="216"/>
        <end position="218"/>
    </location>
    <ligand>
        <name>substrate</name>
        <note>ligand shared between dimeric partners</note>
    </ligand>
</feature>
<feature type="binding site" description="in other chain" evidence="4">
    <location>
        <position position="272"/>
    </location>
    <ligand>
        <name>substrate</name>
        <note>ligand shared between dimeric partners</note>
    </ligand>
</feature>
<feature type="binding site" evidence="4">
    <location>
        <position position="300"/>
    </location>
    <ligand>
        <name>substrate</name>
        <note>ligand shared between dimeric partners</note>
    </ligand>
</feature>
<feature type="binding site" description="in other chain" evidence="4">
    <location>
        <begin position="306"/>
        <end position="309"/>
    </location>
    <ligand>
        <name>substrate</name>
        <note>ligand shared between dimeric partners</note>
    </ligand>
</feature>
<feature type="binding site" description="in other chain" evidence="4">
    <location>
        <position position="480"/>
    </location>
    <ligand>
        <name>beta-D-fructose 2,6-bisphosphate</name>
        <dbReference type="ChEBI" id="CHEBI:58579"/>
        <note>allosteric activator; ligand shared between dimeric partners</note>
    </ligand>
</feature>
<feature type="binding site" description="in other chain" evidence="4">
    <location>
        <begin position="537"/>
        <end position="541"/>
    </location>
    <ligand>
        <name>beta-D-fructose 2,6-bisphosphate</name>
        <dbReference type="ChEBI" id="CHEBI:58579"/>
        <note>allosteric activator; ligand shared between dimeric partners</note>
    </ligand>
</feature>
<feature type="binding site" evidence="4">
    <location>
        <position position="575"/>
    </location>
    <ligand>
        <name>beta-D-fructose 2,6-bisphosphate</name>
        <dbReference type="ChEBI" id="CHEBI:58579"/>
        <note>allosteric activator; ligand shared between dimeric partners</note>
    </ligand>
</feature>
<feature type="binding site" description="in other chain" evidence="4">
    <location>
        <begin position="582"/>
        <end position="584"/>
    </location>
    <ligand>
        <name>beta-D-fructose 2,6-bisphosphate</name>
        <dbReference type="ChEBI" id="CHEBI:58579"/>
        <note>allosteric activator; ligand shared between dimeric partners</note>
    </ligand>
</feature>
<feature type="binding site" description="in other chain" evidence="4">
    <location>
        <position position="638"/>
    </location>
    <ligand>
        <name>beta-D-fructose 2,6-bisphosphate</name>
        <dbReference type="ChEBI" id="CHEBI:58579"/>
        <note>allosteric activator; ligand shared between dimeric partners</note>
    </ligand>
</feature>
<feature type="binding site" evidence="4">
    <location>
        <position position="664"/>
    </location>
    <ligand>
        <name>beta-D-fructose 2,6-bisphosphate</name>
        <dbReference type="ChEBI" id="CHEBI:58579"/>
        <note>allosteric activator; ligand shared between dimeric partners</note>
    </ligand>
</feature>
<feature type="binding site" description="in other chain" evidence="4">
    <location>
        <begin position="670"/>
        <end position="673"/>
    </location>
    <ligand>
        <name>beta-D-fructose 2,6-bisphosphate</name>
        <dbReference type="ChEBI" id="CHEBI:58579"/>
        <note>allosteric activator; ligand shared between dimeric partners</note>
    </ligand>
</feature>
<feature type="binding site" description="in other chain" evidence="4">
    <location>
        <position position="743"/>
    </location>
    <ligand>
        <name>beta-D-fructose 2,6-bisphosphate</name>
        <dbReference type="ChEBI" id="CHEBI:58579"/>
        <note>allosteric activator; ligand shared between dimeric partners</note>
    </ligand>
</feature>
<feature type="modified residue" description="N-acetylmethionine" evidence="3">
    <location>
        <position position="1"/>
    </location>
</feature>
<feature type="modified residue" description="Phosphoserine" evidence="2">
    <location>
        <position position="2"/>
    </location>
</feature>
<feature type="modified residue" description="Phosphoserine" evidence="3">
    <location>
        <position position="6"/>
    </location>
</feature>
<feature type="modified residue" description="Phosphoserine" evidence="3">
    <location>
        <position position="20"/>
    </location>
</feature>
<feature type="modified residue" description="Phosphoserine" evidence="2">
    <location>
        <position position="141"/>
    </location>
</feature>
<feature type="modified residue" description="N6-acetyllysine" evidence="3">
    <location>
        <position position="394"/>
    </location>
</feature>
<feature type="modified residue" description="N6-acetyllysine" evidence="3">
    <location>
        <position position="485"/>
    </location>
</feature>
<feature type="modified residue" description="Phosphotyrosine" evidence="11">
    <location>
        <position position="650"/>
    </location>
</feature>
<feature type="modified residue" description="N6-acetyllysine" evidence="12">
    <location>
        <position position="687"/>
    </location>
</feature>
<feature type="glycosylation site" description="O-linked (GlcNAc) serine" evidence="1">
    <location>
        <position position="539"/>
    </location>
</feature>
<feature type="splice variant" id="VSP_016664" description="In isoform 2." evidence="9">
    <original>IKEIGWADVGGWTGQGGSILGTKRTLPGKYLEKIAEQMHS</original>
    <variation>VSLPGVLGMLKCYCIWGGHPPLTAPTKSRFLVVGLYQILI</variation>
    <location>
        <begin position="457"/>
        <end position="496"/>
    </location>
</feature>
<feature type="splice variant" id="VSP_016665" description="In isoform 2." evidence="9">
    <location>
        <begin position="497"/>
        <end position="784"/>
    </location>
</feature>
<feature type="sequence variant" description="In strain: NOD." evidence="8">
    <original>E</original>
    <variation>V</variation>
    <location>
        <position position="104"/>
    </location>
</feature>
<feature type="sequence variant" description="In strain: C57BL/6J." evidence="8">
    <original>E</original>
    <variation>G</variation>
    <location>
        <position position="145"/>
    </location>
</feature>
<feature type="sequence variant" description="In strain: C57BL/6." evidence="6">
    <original>T</original>
    <variation>P</variation>
    <location>
        <position position="180"/>
    </location>
</feature>
<feature type="sequence variant" description="In strain: LG/J and NOD." evidence="7 8">
    <original>R</original>
    <variation>Q</variation>
    <location>
        <position position="261"/>
    </location>
</feature>
<feature type="sequence variant" description="In strain: LG/J and NOD." evidence="7 8">
    <original>V</original>
    <variation>M</variation>
    <location>
        <position position="292"/>
    </location>
</feature>
<feature type="sequence variant" description="In strain: C57BL/6J." evidence="8">
    <original>D</original>
    <variation>E</variation>
    <location>
        <position position="402"/>
    </location>
</feature>
<feature type="sequence variant" description="In strain: C57BL/6J." evidence="8">
    <original>P</original>
    <variation>S</variation>
    <location>
        <position position="679"/>
    </location>
</feature>
<feature type="sequence variant" description="In strain: LG/J and NOD." evidence="7 8">
    <original>E</original>
    <variation>D</variation>
    <location>
        <position position="694"/>
    </location>
</feature>
<feature type="sequence variant" description="In strain: NOD." evidence="8">
    <original>I</original>
    <variation>F</variation>
    <location>
        <position position="696"/>
    </location>
</feature>
<feature type="sequence variant" description="In strain: LG/J and NOD." evidence="7 8">
    <original>S</original>
    <variation>P</variation>
    <location>
        <position position="777"/>
    </location>
</feature>
<feature type="sequence variant" description="In strain: LG/J and NOD." evidence="7 8">
    <original>E</original>
    <variation>G</variation>
    <location>
        <position position="782"/>
    </location>
</feature>
<evidence type="ECO:0000250" key="1"/>
<evidence type="ECO:0000250" key="2">
    <source>
        <dbReference type="UniProtKB" id="P47860"/>
    </source>
</evidence>
<evidence type="ECO:0000250" key="3">
    <source>
        <dbReference type="UniProtKB" id="Q01813"/>
    </source>
</evidence>
<evidence type="ECO:0000255" key="4">
    <source>
        <dbReference type="HAMAP-Rule" id="MF_03184"/>
    </source>
</evidence>
<evidence type="ECO:0000269" key="5">
    <source>
    </source>
</evidence>
<evidence type="ECO:0000269" key="6">
    <source>
    </source>
</evidence>
<evidence type="ECO:0000269" key="7">
    <source>
    </source>
</evidence>
<evidence type="ECO:0000269" key="8">
    <source>
    </source>
</evidence>
<evidence type="ECO:0000303" key="9">
    <source>
    </source>
</evidence>
<evidence type="ECO:0000305" key="10"/>
<evidence type="ECO:0007744" key="11">
    <source>
    </source>
</evidence>
<evidence type="ECO:0007744" key="12">
    <source>
    </source>
</evidence>
<name>PFKAP_MOUSE</name>
<organism>
    <name type="scientific">Mus musculus</name>
    <name type="common">Mouse</name>
    <dbReference type="NCBI Taxonomy" id="10090"/>
    <lineage>
        <taxon>Eukaryota</taxon>
        <taxon>Metazoa</taxon>
        <taxon>Chordata</taxon>
        <taxon>Craniata</taxon>
        <taxon>Vertebrata</taxon>
        <taxon>Euteleostomi</taxon>
        <taxon>Mammalia</taxon>
        <taxon>Eutheria</taxon>
        <taxon>Euarchontoglires</taxon>
        <taxon>Glires</taxon>
        <taxon>Rodentia</taxon>
        <taxon>Myomorpha</taxon>
        <taxon>Muroidea</taxon>
        <taxon>Muridae</taxon>
        <taxon>Murinae</taxon>
        <taxon>Mus</taxon>
        <taxon>Mus</taxon>
    </lineage>
</organism>
<protein>
    <recommendedName>
        <fullName evidence="4">ATP-dependent 6-phosphofructokinase, platelet type</fullName>
        <shortName evidence="4">ATP-PFK</shortName>
        <shortName>PFK-P</shortName>
        <ecNumber evidence="4">2.7.1.11</ecNumber>
    </recommendedName>
    <alternativeName>
        <fullName>6-phosphofructokinase type C</fullName>
    </alternativeName>
    <alternativeName>
        <fullName>Phosphofructo-1-kinase isozyme C</fullName>
        <shortName>PFK-C</shortName>
    </alternativeName>
    <alternativeName>
        <fullName evidence="4">Phosphohexokinase</fullName>
    </alternativeName>
</protein>
<sequence>MSDLDSSSSSAYPKYLEHLSGDGKAIGVLTSGGDAQGMNAAVRAVVRMGIYTGAKVYFIYEGYQGLVDGGSNIVEAKWDCVSSILQVGGTIIGSARCKAFRSREGRLKAACNLARLGITNLCVIGGDGSLTGANLFRKEWSGLLEELARNGDIDNDTVQKYSYLNVVGMVGSIDNDFCGTDMTIGTDSALHRIIEVVDAIMTTAQSHQRTFVLEVMGRHCGYLALVSALTCGADWVFLPESPPEEDWEENMCLKLSENRARKKRLNIIIVSEGAIDMQNKPITSEKIKELVVKNLGFDTRVTILGHVQRGGTPSAFDRILASRMGVEAVIALLEATPETPACVVSLRGNQAVRLPLMECVQMTQDVQKAMDERRFKEAVKLRGRRFEGNLNTYKRLAIKLPDEKIVKSNCNVAVINVGAPAAGMNAAVRSAVRVGIADGHKMFAIYDGFEGFANGQIKEIGWADVGGWTGQGGSILGTKRTLPGKYLEKIAEQMHSHSINALLIIGGFEAYLGLLELAAAREKHEAFCVPMVMVPATVSNNVPGSDFSIGADTALNTITDTCDRIKQSASGTKRRVFIIETMGGYCGYLANMGALAAGADAAYIFEEPFDIGDLQSNVVHLTEKMKTSIQRGLVLRNESCSVNYTTDFIYQLYSEEGKGVFDCRKNVLGHMQQGGAPSPFDRNFGTKISAKAMEWISAKLKGSQGTGKKFVSDDSICVLGICKRDLLFQPVAELKKVTDFEHRIPKEQWWLKLRPIMKILAKYEASYDMSDSGKLESLQHHEEL</sequence>
<comment type="function">
    <text>Catalyzes the phosphorylation of D-fructose 6-phosphate to fructose 1,6-bisphosphate by ATP, the first committing step of glycolysis.</text>
</comment>
<comment type="catalytic activity">
    <reaction evidence="4">
        <text>beta-D-fructose 6-phosphate + ATP = beta-D-fructose 1,6-bisphosphate + ADP + H(+)</text>
        <dbReference type="Rhea" id="RHEA:16109"/>
        <dbReference type="ChEBI" id="CHEBI:15378"/>
        <dbReference type="ChEBI" id="CHEBI:30616"/>
        <dbReference type="ChEBI" id="CHEBI:32966"/>
        <dbReference type="ChEBI" id="CHEBI:57634"/>
        <dbReference type="ChEBI" id="CHEBI:456216"/>
        <dbReference type="EC" id="2.7.1.11"/>
    </reaction>
</comment>
<comment type="cofactor">
    <cofactor evidence="4">
        <name>Mg(2+)</name>
        <dbReference type="ChEBI" id="CHEBI:18420"/>
    </cofactor>
</comment>
<comment type="activity regulation">
    <text evidence="4">Allosterically activated by ADP, AMP, or fructose 2,6-bisphosphate, and allosterically inhibited by ATP or citrate.</text>
</comment>
<comment type="pathway">
    <text evidence="4">Carbohydrate degradation; glycolysis; D-glyceraldehyde 3-phosphate and glycerone phosphate from D-glucose: step 3/4.</text>
</comment>
<comment type="subunit">
    <text evidence="4 10">Homo- and heterotetramers (By similarity). Phosphofructokinase (PFK) enzyme functions as a tetramer composed of different combinations of 3 types of subunits, called PFKM (M), PFKL (L) and PFKP (P). The composition of the PFK tetramer differs according to the tissue type it is present in. The kinetic and regulatory properties of the tetrameric enzyme are dependent on the subunit composition, hence can vary across tissues (Probable). Interacts with ATG4B; promoting phosphorylation of ATG4B.</text>
</comment>
<comment type="subcellular location">
    <subcellularLocation>
        <location evidence="4">Cytoplasm</location>
    </subcellularLocation>
</comment>
<comment type="alternative products">
    <event type="alternative splicing"/>
    <isoform>
        <id>Q9WUA3-1</id>
        <name>1</name>
        <sequence type="displayed"/>
    </isoform>
    <isoform>
        <id>Q9WUA3-2</id>
        <name>2</name>
        <sequence type="described" ref="VSP_016664 VSP_016665"/>
    </isoform>
</comment>
<comment type="tissue specificity">
    <text evidence="5">Expression is constant during tumor growth and markedly decreases when cell proliferation stops.</text>
</comment>
<comment type="PTM">
    <text evidence="1">GlcNAcylation decreases enzyme activity.</text>
</comment>
<comment type="miscellaneous">
    <molecule>Isoform 2</molecule>
    <text evidence="10">May be due to intron retention.</text>
</comment>
<comment type="similarity">
    <text evidence="4">Belongs to the phosphofructokinase type A (PFKA) family. ATP-dependent PFK group I subfamily. Eukaryotic two domain clade 'E' sub-subfamily.</text>
</comment>
<proteinExistence type="evidence at protein level"/>
<accession>Q9WUA3</accession>
<accession>Q3TNA9</accession>
<accession>Q3U4P1</accession>
<accession>Q3U7G4</accession>
<accession>Q4KUG1</accession>
<accession>Q543K8</accession>
<accession>Q8C5I6</accession>
<accession>Q9JI86</accession>
<reference key="1">
    <citation type="journal article" date="2000" name="Biochem. Biophys. Res. Commun.">
        <title>Phosphofructokinase C isozyme from ascites tumor cells: cloning, expression, and properties.</title>
        <authorList>
            <person name="Sanchez-Martinez C."/>
            <person name="Estevez A.M."/>
            <person name="Aragon J.J."/>
        </authorList>
    </citation>
    <scope>NUCLEOTIDE SEQUENCE [MRNA] (ISOFORM 1)</scope>
    <scope>TISSUE SPECIFICITY</scope>
    <source>
        <tissue>Ascitic tumor</tissue>
    </source>
</reference>
<reference key="2">
    <citation type="journal article" date="2000" name="Gene">
        <title>Genomic organization, 5'flanking region and tissue-specific expression of mouse phosphofructokinase C gene.</title>
        <authorList>
            <person name="Gunasekera D."/>
            <person name="Kemp R.G."/>
        </authorList>
    </citation>
    <scope>NUCLEOTIDE SEQUENCE [GENOMIC DNA / MRNA] (ISOFORM 1)</scope>
    <scope>VARIANT PRO-180</scope>
    <source>
        <strain>C57BL/6J</strain>
        <tissue>Brain</tissue>
    </source>
</reference>
<reference key="3">
    <citation type="journal article" date="2005" name="Diabetes">
        <title>Fine-mapping gene-by-diet interactions on chromosome 13 in a LG/J x SM/J murine model of obesity.</title>
        <authorList>
            <person name="Ehrich T.H."/>
            <person name="Hrbek T."/>
            <person name="Kenney-Hunt J.P."/>
            <person name="Pletscher L.S."/>
            <person name="Wang B."/>
            <person name="Semenkovich C.F."/>
            <person name="Cheverud J.M."/>
        </authorList>
    </citation>
    <scope>NUCLEOTIDE SEQUENCE [MRNA] (ISOFORM 1)</scope>
    <scope>VARIANTS GLN-261; MET-292; ASP-694; PRO-777 AND GLY-782</scope>
    <source>
        <strain>LG/J</strain>
        <strain>SM/J</strain>
    </source>
</reference>
<reference key="4">
    <citation type="journal article" date="2005" name="Science">
        <title>The transcriptional landscape of the mammalian genome.</title>
        <authorList>
            <person name="Carninci P."/>
            <person name="Kasukawa T."/>
            <person name="Katayama S."/>
            <person name="Gough J."/>
            <person name="Frith M.C."/>
            <person name="Maeda N."/>
            <person name="Oyama R."/>
            <person name="Ravasi T."/>
            <person name="Lenhard B."/>
            <person name="Wells C."/>
            <person name="Kodzius R."/>
            <person name="Shimokawa K."/>
            <person name="Bajic V.B."/>
            <person name="Brenner S.E."/>
            <person name="Batalov S."/>
            <person name="Forrest A.R."/>
            <person name="Zavolan M."/>
            <person name="Davis M.J."/>
            <person name="Wilming L.G."/>
            <person name="Aidinis V."/>
            <person name="Allen J.E."/>
            <person name="Ambesi-Impiombato A."/>
            <person name="Apweiler R."/>
            <person name="Aturaliya R.N."/>
            <person name="Bailey T.L."/>
            <person name="Bansal M."/>
            <person name="Baxter L."/>
            <person name="Beisel K.W."/>
            <person name="Bersano T."/>
            <person name="Bono H."/>
            <person name="Chalk A.M."/>
            <person name="Chiu K.P."/>
            <person name="Choudhary V."/>
            <person name="Christoffels A."/>
            <person name="Clutterbuck D.R."/>
            <person name="Crowe M.L."/>
            <person name="Dalla E."/>
            <person name="Dalrymple B.P."/>
            <person name="de Bono B."/>
            <person name="Della Gatta G."/>
            <person name="di Bernardo D."/>
            <person name="Down T."/>
            <person name="Engstrom P."/>
            <person name="Fagiolini M."/>
            <person name="Faulkner G."/>
            <person name="Fletcher C.F."/>
            <person name="Fukushima T."/>
            <person name="Furuno M."/>
            <person name="Futaki S."/>
            <person name="Gariboldi M."/>
            <person name="Georgii-Hemming P."/>
            <person name="Gingeras T.R."/>
            <person name="Gojobori T."/>
            <person name="Green R.E."/>
            <person name="Gustincich S."/>
            <person name="Harbers M."/>
            <person name="Hayashi Y."/>
            <person name="Hensch T.K."/>
            <person name="Hirokawa N."/>
            <person name="Hill D."/>
            <person name="Huminiecki L."/>
            <person name="Iacono M."/>
            <person name="Ikeo K."/>
            <person name="Iwama A."/>
            <person name="Ishikawa T."/>
            <person name="Jakt M."/>
            <person name="Kanapin A."/>
            <person name="Katoh M."/>
            <person name="Kawasawa Y."/>
            <person name="Kelso J."/>
            <person name="Kitamura H."/>
            <person name="Kitano H."/>
            <person name="Kollias G."/>
            <person name="Krishnan S.P."/>
            <person name="Kruger A."/>
            <person name="Kummerfeld S.K."/>
            <person name="Kurochkin I.V."/>
            <person name="Lareau L.F."/>
            <person name="Lazarevic D."/>
            <person name="Lipovich L."/>
            <person name="Liu J."/>
            <person name="Liuni S."/>
            <person name="McWilliam S."/>
            <person name="Madan Babu M."/>
            <person name="Madera M."/>
            <person name="Marchionni L."/>
            <person name="Matsuda H."/>
            <person name="Matsuzawa S."/>
            <person name="Miki H."/>
            <person name="Mignone F."/>
            <person name="Miyake S."/>
            <person name="Morris K."/>
            <person name="Mottagui-Tabar S."/>
            <person name="Mulder N."/>
            <person name="Nakano N."/>
            <person name="Nakauchi H."/>
            <person name="Ng P."/>
            <person name="Nilsson R."/>
            <person name="Nishiguchi S."/>
            <person name="Nishikawa S."/>
            <person name="Nori F."/>
            <person name="Ohara O."/>
            <person name="Okazaki Y."/>
            <person name="Orlando V."/>
            <person name="Pang K.C."/>
            <person name="Pavan W.J."/>
            <person name="Pavesi G."/>
            <person name="Pesole G."/>
            <person name="Petrovsky N."/>
            <person name="Piazza S."/>
            <person name="Reed J."/>
            <person name="Reid J.F."/>
            <person name="Ring B.Z."/>
            <person name="Ringwald M."/>
            <person name="Rost B."/>
            <person name="Ruan Y."/>
            <person name="Salzberg S.L."/>
            <person name="Sandelin A."/>
            <person name="Schneider C."/>
            <person name="Schoenbach C."/>
            <person name="Sekiguchi K."/>
            <person name="Semple C.A."/>
            <person name="Seno S."/>
            <person name="Sessa L."/>
            <person name="Sheng Y."/>
            <person name="Shibata Y."/>
            <person name="Shimada H."/>
            <person name="Shimada K."/>
            <person name="Silva D."/>
            <person name="Sinclair B."/>
            <person name="Sperling S."/>
            <person name="Stupka E."/>
            <person name="Sugiura K."/>
            <person name="Sultana R."/>
            <person name="Takenaka Y."/>
            <person name="Taki K."/>
            <person name="Tammoja K."/>
            <person name="Tan S.L."/>
            <person name="Tang S."/>
            <person name="Taylor M.S."/>
            <person name="Tegner J."/>
            <person name="Teichmann S.A."/>
            <person name="Ueda H.R."/>
            <person name="van Nimwegen E."/>
            <person name="Verardo R."/>
            <person name="Wei C.L."/>
            <person name="Yagi K."/>
            <person name="Yamanishi H."/>
            <person name="Zabarovsky E."/>
            <person name="Zhu S."/>
            <person name="Zimmer A."/>
            <person name="Hide W."/>
            <person name="Bult C."/>
            <person name="Grimmond S.M."/>
            <person name="Teasdale R.D."/>
            <person name="Liu E.T."/>
            <person name="Brusic V."/>
            <person name="Quackenbush J."/>
            <person name="Wahlestedt C."/>
            <person name="Mattick J.S."/>
            <person name="Hume D.A."/>
            <person name="Kai C."/>
            <person name="Sasaki D."/>
            <person name="Tomaru Y."/>
            <person name="Fukuda S."/>
            <person name="Kanamori-Katayama M."/>
            <person name="Suzuki M."/>
            <person name="Aoki J."/>
            <person name="Arakawa T."/>
            <person name="Iida J."/>
            <person name="Imamura K."/>
            <person name="Itoh M."/>
            <person name="Kato T."/>
            <person name="Kawaji H."/>
            <person name="Kawagashira N."/>
            <person name="Kawashima T."/>
            <person name="Kojima M."/>
            <person name="Kondo S."/>
            <person name="Konno H."/>
            <person name="Nakano K."/>
            <person name="Ninomiya N."/>
            <person name="Nishio T."/>
            <person name="Okada M."/>
            <person name="Plessy C."/>
            <person name="Shibata K."/>
            <person name="Shiraki T."/>
            <person name="Suzuki S."/>
            <person name="Tagami M."/>
            <person name="Waki K."/>
            <person name="Watahiki A."/>
            <person name="Okamura-Oho Y."/>
            <person name="Suzuki H."/>
            <person name="Kawai J."/>
            <person name="Hayashizaki Y."/>
        </authorList>
    </citation>
    <scope>NUCLEOTIDE SEQUENCE [LARGE SCALE MRNA] (ISOFORMS 1 AND 2)</scope>
    <scope>VARIANTS VAL-104; GLY-145; GLN-261; MET-292; GLU-402; SER-679; ASP-694; PHE-696; PRO-777 AND GLY-782</scope>
    <source>
        <strain>C57BL/6J</strain>
        <strain>NOD</strain>
        <tissue>Bone marrow</tissue>
        <tissue>Hippocampus</tissue>
        <tissue>Kidney</tissue>
        <tissue>Olfactory bulb</tissue>
    </source>
</reference>
<reference key="5">
    <citation type="submission" date="2005-07" db="EMBL/GenBank/DDBJ databases">
        <title>Cloning of mouse full open reading frames in Gateway(R) system entry vector (pDONR201).</title>
        <authorList>
            <person name="Ebert L."/>
            <person name="Muenstermann E."/>
            <person name="Schatten R."/>
            <person name="Henze S."/>
            <person name="Bohn E."/>
            <person name="Mollenhauer J."/>
            <person name="Wiemann S."/>
            <person name="Schick M."/>
            <person name="Korn B."/>
        </authorList>
    </citation>
    <scope>NUCLEOTIDE SEQUENCE [LARGE SCALE MRNA] (ISOFORM 1)</scope>
</reference>
<reference key="6">
    <citation type="journal article" date="2004" name="Genome Res.">
        <title>The status, quality, and expansion of the NIH full-length cDNA project: the Mammalian Gene Collection (MGC).</title>
        <authorList>
            <consortium name="The MGC Project Team"/>
        </authorList>
    </citation>
    <scope>NUCLEOTIDE SEQUENCE [LARGE SCALE MRNA] (ISOFORM 1)</scope>
    <source>
        <strain>FVB/N-3</strain>
        <tissue>Mammary gland</tissue>
    </source>
</reference>
<reference key="7">
    <citation type="journal article" date="2007" name="J. Immunol.">
        <title>Quantitative time-resolved phosphoproteomic analysis of mast cell signaling.</title>
        <authorList>
            <person name="Cao L."/>
            <person name="Yu K."/>
            <person name="Banh C."/>
            <person name="Nguyen V."/>
            <person name="Ritz A."/>
            <person name="Raphael B.J."/>
            <person name="Kawakami Y."/>
            <person name="Kawakami T."/>
            <person name="Salomon A.R."/>
        </authorList>
    </citation>
    <scope>PHOSPHORYLATION [LARGE SCALE ANALYSIS] AT TYR-650</scope>
    <scope>IDENTIFICATION BY MASS SPECTROMETRY [LARGE SCALE ANALYSIS]</scope>
    <source>
        <tissue>Mast cell</tissue>
    </source>
</reference>
<reference key="8">
    <citation type="journal article" date="2010" name="Cell">
        <title>A tissue-specific atlas of mouse protein phosphorylation and expression.</title>
        <authorList>
            <person name="Huttlin E.L."/>
            <person name="Jedrychowski M.P."/>
            <person name="Elias J.E."/>
            <person name="Goswami T."/>
            <person name="Rad R."/>
            <person name="Beausoleil S.A."/>
            <person name="Villen J."/>
            <person name="Haas W."/>
            <person name="Sowa M.E."/>
            <person name="Gygi S.P."/>
        </authorList>
    </citation>
    <scope>IDENTIFICATION BY MASS SPECTROMETRY [LARGE SCALE ANALYSIS]</scope>
    <source>
        <tissue>Brain</tissue>
        <tissue>Brown adipose tissue</tissue>
        <tissue>Heart</tissue>
        <tissue>Kidney</tissue>
        <tissue>Lung</tissue>
        <tissue>Spleen</tissue>
        <tissue>Testis</tissue>
    </source>
</reference>
<reference key="9">
    <citation type="journal article" date="2013" name="Mol. Cell">
        <title>SIRT5-mediated lysine desuccinylation impacts diverse metabolic pathways.</title>
        <authorList>
            <person name="Park J."/>
            <person name="Chen Y."/>
            <person name="Tishkoff D.X."/>
            <person name="Peng C."/>
            <person name="Tan M."/>
            <person name="Dai L."/>
            <person name="Xie Z."/>
            <person name="Zhang Y."/>
            <person name="Zwaans B.M."/>
            <person name="Skinner M.E."/>
            <person name="Lombard D.B."/>
            <person name="Zhao Y."/>
        </authorList>
    </citation>
    <scope>ACETYLATION [LARGE SCALE ANALYSIS] AT LYS-687</scope>
    <scope>IDENTIFICATION BY MASS SPECTROMETRY [LARGE SCALE ANALYSIS]</scope>
    <source>
        <tissue>Embryonic fibroblast</tissue>
    </source>
</reference>